<keyword id="KW-0687">Ribonucleoprotein</keyword>
<keyword id="KW-0689">Ribosomal protein</keyword>
<sequence>MNDLKSLKSELTSKTVEELFKHLNLLKKELFNLRFQQTLGELKNTSRFSLVKKSIARIKTELTKRSSSGE</sequence>
<accession>Q1RHM9</accession>
<reference key="1">
    <citation type="journal article" date="2006" name="PLoS Genet.">
        <title>Genome sequence of Rickettsia bellii illuminates the role of amoebae in gene exchanges between intracellular pathogens.</title>
        <authorList>
            <person name="Ogata H."/>
            <person name="La Scola B."/>
            <person name="Audic S."/>
            <person name="Renesto P."/>
            <person name="Blanc G."/>
            <person name="Robert C."/>
            <person name="Fournier P.-E."/>
            <person name="Claverie J.-M."/>
            <person name="Raoult D."/>
        </authorList>
    </citation>
    <scope>NUCLEOTIDE SEQUENCE [LARGE SCALE GENOMIC DNA]</scope>
    <source>
        <strain>RML369-C</strain>
    </source>
</reference>
<name>RL29_RICBR</name>
<comment type="similarity">
    <text evidence="1">Belongs to the universal ribosomal protein uL29 family.</text>
</comment>
<dbReference type="EMBL" id="CP000087">
    <property type="protein sequence ID" value="ABE05135.1"/>
    <property type="molecule type" value="Genomic_DNA"/>
</dbReference>
<dbReference type="RefSeq" id="WP_011477713.1">
    <property type="nucleotide sequence ID" value="NC_007940.1"/>
</dbReference>
<dbReference type="SMR" id="Q1RHM9"/>
<dbReference type="KEGG" id="rbe:RBE_1054"/>
<dbReference type="eggNOG" id="COG0255">
    <property type="taxonomic scope" value="Bacteria"/>
</dbReference>
<dbReference type="HOGENOM" id="CLU_158491_1_0_5"/>
<dbReference type="OrthoDB" id="9815192at2"/>
<dbReference type="Proteomes" id="UP000001951">
    <property type="component" value="Chromosome"/>
</dbReference>
<dbReference type="GO" id="GO:0022625">
    <property type="term" value="C:cytosolic large ribosomal subunit"/>
    <property type="evidence" value="ECO:0007669"/>
    <property type="project" value="TreeGrafter"/>
</dbReference>
<dbReference type="GO" id="GO:0003735">
    <property type="term" value="F:structural constituent of ribosome"/>
    <property type="evidence" value="ECO:0007669"/>
    <property type="project" value="InterPro"/>
</dbReference>
<dbReference type="GO" id="GO:0006412">
    <property type="term" value="P:translation"/>
    <property type="evidence" value="ECO:0007669"/>
    <property type="project" value="UniProtKB-UniRule"/>
</dbReference>
<dbReference type="CDD" id="cd00427">
    <property type="entry name" value="Ribosomal_L29_HIP"/>
    <property type="match status" value="1"/>
</dbReference>
<dbReference type="FunFam" id="1.10.287.310:FF:000001">
    <property type="entry name" value="50S ribosomal protein L29"/>
    <property type="match status" value="1"/>
</dbReference>
<dbReference type="Gene3D" id="1.10.287.310">
    <property type="match status" value="1"/>
</dbReference>
<dbReference type="HAMAP" id="MF_00374">
    <property type="entry name" value="Ribosomal_uL29"/>
    <property type="match status" value="1"/>
</dbReference>
<dbReference type="InterPro" id="IPR050063">
    <property type="entry name" value="Ribosomal_protein_uL29"/>
</dbReference>
<dbReference type="InterPro" id="IPR001854">
    <property type="entry name" value="Ribosomal_uL29"/>
</dbReference>
<dbReference type="InterPro" id="IPR018254">
    <property type="entry name" value="Ribosomal_uL29_CS"/>
</dbReference>
<dbReference type="InterPro" id="IPR036049">
    <property type="entry name" value="Ribosomal_uL29_sf"/>
</dbReference>
<dbReference type="NCBIfam" id="TIGR00012">
    <property type="entry name" value="L29"/>
    <property type="match status" value="1"/>
</dbReference>
<dbReference type="PANTHER" id="PTHR10916">
    <property type="entry name" value="60S RIBOSOMAL PROTEIN L35/50S RIBOSOMAL PROTEIN L29"/>
    <property type="match status" value="1"/>
</dbReference>
<dbReference type="PANTHER" id="PTHR10916:SF0">
    <property type="entry name" value="LARGE RIBOSOMAL SUBUNIT PROTEIN UL29C"/>
    <property type="match status" value="1"/>
</dbReference>
<dbReference type="Pfam" id="PF00831">
    <property type="entry name" value="Ribosomal_L29"/>
    <property type="match status" value="1"/>
</dbReference>
<dbReference type="SUPFAM" id="SSF46561">
    <property type="entry name" value="Ribosomal protein L29 (L29p)"/>
    <property type="match status" value="1"/>
</dbReference>
<dbReference type="PROSITE" id="PS00579">
    <property type="entry name" value="RIBOSOMAL_L29"/>
    <property type="match status" value="1"/>
</dbReference>
<proteinExistence type="inferred from homology"/>
<evidence type="ECO:0000255" key="1">
    <source>
        <dbReference type="HAMAP-Rule" id="MF_00374"/>
    </source>
</evidence>
<evidence type="ECO:0000305" key="2"/>
<feature type="chain" id="PRO_0000277966" description="Large ribosomal subunit protein uL29">
    <location>
        <begin position="1"/>
        <end position="70"/>
    </location>
</feature>
<organism>
    <name type="scientific">Rickettsia bellii (strain RML369-C)</name>
    <dbReference type="NCBI Taxonomy" id="336407"/>
    <lineage>
        <taxon>Bacteria</taxon>
        <taxon>Pseudomonadati</taxon>
        <taxon>Pseudomonadota</taxon>
        <taxon>Alphaproteobacteria</taxon>
        <taxon>Rickettsiales</taxon>
        <taxon>Rickettsiaceae</taxon>
        <taxon>Rickettsieae</taxon>
        <taxon>Rickettsia</taxon>
        <taxon>belli group</taxon>
    </lineage>
</organism>
<protein>
    <recommendedName>
        <fullName evidence="1">Large ribosomal subunit protein uL29</fullName>
    </recommendedName>
    <alternativeName>
        <fullName evidence="2">50S ribosomal protein L29</fullName>
    </alternativeName>
</protein>
<gene>
    <name evidence="1" type="primary">rpmC</name>
    <name type="ordered locus">RBE_1054</name>
</gene>